<evidence type="ECO:0000255" key="1">
    <source>
        <dbReference type="HAMAP-Rule" id="MF_01331"/>
    </source>
</evidence>
<evidence type="ECO:0000305" key="2"/>
<keyword id="KW-0687">Ribonucleoprotein</keyword>
<keyword id="KW-0689">Ribosomal protein</keyword>
<keyword id="KW-0694">RNA-binding</keyword>
<keyword id="KW-0699">rRNA-binding</keyword>
<name>RL22_RHOPB</name>
<organism>
    <name type="scientific">Rhodopseudomonas palustris (strain BisB18)</name>
    <dbReference type="NCBI Taxonomy" id="316056"/>
    <lineage>
        <taxon>Bacteria</taxon>
        <taxon>Pseudomonadati</taxon>
        <taxon>Pseudomonadota</taxon>
        <taxon>Alphaproteobacteria</taxon>
        <taxon>Hyphomicrobiales</taxon>
        <taxon>Nitrobacteraceae</taxon>
        <taxon>Rhodopseudomonas</taxon>
    </lineage>
</organism>
<sequence>MSKPKRERSLPDNEAKAIARMLRVSPQKLNLVAQLIRGRKASAALADLQFSRKRIAVDVKKCLESAIANAENNHDLDVDALIVSEAHVGKGIVMKRFAPRGRGRSGRIFKPFAQLTIVVRQVEAEASA</sequence>
<protein>
    <recommendedName>
        <fullName evidence="1">Large ribosomal subunit protein uL22</fullName>
    </recommendedName>
    <alternativeName>
        <fullName evidence="2">50S ribosomal protein L22</fullName>
    </alternativeName>
</protein>
<comment type="function">
    <text evidence="1">This protein binds specifically to 23S rRNA; its binding is stimulated by other ribosomal proteins, e.g. L4, L17, and L20. It is important during the early stages of 50S assembly. It makes multiple contacts with different domains of the 23S rRNA in the assembled 50S subunit and ribosome (By similarity).</text>
</comment>
<comment type="function">
    <text evidence="1">The globular domain of the protein is located near the polypeptide exit tunnel on the outside of the subunit, while an extended beta-hairpin is found that lines the wall of the exit tunnel in the center of the 70S ribosome.</text>
</comment>
<comment type="subunit">
    <text evidence="1">Part of the 50S ribosomal subunit.</text>
</comment>
<comment type="similarity">
    <text evidence="1">Belongs to the universal ribosomal protein uL22 family.</text>
</comment>
<gene>
    <name evidence="1" type="primary">rplV</name>
    <name type="ordered locus">RPC_3443</name>
</gene>
<proteinExistence type="inferred from homology"/>
<dbReference type="EMBL" id="CP000301">
    <property type="protein sequence ID" value="ABD88983.1"/>
    <property type="molecule type" value="Genomic_DNA"/>
</dbReference>
<dbReference type="SMR" id="Q211F3"/>
<dbReference type="STRING" id="316056.RPC_3443"/>
<dbReference type="KEGG" id="rpc:RPC_3443"/>
<dbReference type="eggNOG" id="COG0091">
    <property type="taxonomic scope" value="Bacteria"/>
</dbReference>
<dbReference type="HOGENOM" id="CLU_083987_3_0_5"/>
<dbReference type="OrthoDB" id="9805969at2"/>
<dbReference type="GO" id="GO:0022625">
    <property type="term" value="C:cytosolic large ribosomal subunit"/>
    <property type="evidence" value="ECO:0007669"/>
    <property type="project" value="TreeGrafter"/>
</dbReference>
<dbReference type="GO" id="GO:0019843">
    <property type="term" value="F:rRNA binding"/>
    <property type="evidence" value="ECO:0007669"/>
    <property type="project" value="UniProtKB-UniRule"/>
</dbReference>
<dbReference type="GO" id="GO:0003735">
    <property type="term" value="F:structural constituent of ribosome"/>
    <property type="evidence" value="ECO:0007669"/>
    <property type="project" value="InterPro"/>
</dbReference>
<dbReference type="GO" id="GO:0006412">
    <property type="term" value="P:translation"/>
    <property type="evidence" value="ECO:0007669"/>
    <property type="project" value="UniProtKB-UniRule"/>
</dbReference>
<dbReference type="CDD" id="cd00336">
    <property type="entry name" value="Ribosomal_L22"/>
    <property type="match status" value="1"/>
</dbReference>
<dbReference type="Gene3D" id="3.90.470.10">
    <property type="entry name" value="Ribosomal protein L22/L17"/>
    <property type="match status" value="1"/>
</dbReference>
<dbReference type="HAMAP" id="MF_01331_B">
    <property type="entry name" value="Ribosomal_uL22_B"/>
    <property type="match status" value="1"/>
</dbReference>
<dbReference type="InterPro" id="IPR001063">
    <property type="entry name" value="Ribosomal_uL22"/>
</dbReference>
<dbReference type="InterPro" id="IPR005727">
    <property type="entry name" value="Ribosomal_uL22_bac/chlpt-type"/>
</dbReference>
<dbReference type="InterPro" id="IPR047867">
    <property type="entry name" value="Ribosomal_uL22_bac/org-type"/>
</dbReference>
<dbReference type="InterPro" id="IPR036394">
    <property type="entry name" value="Ribosomal_uL22_sf"/>
</dbReference>
<dbReference type="NCBIfam" id="TIGR01044">
    <property type="entry name" value="rplV_bact"/>
    <property type="match status" value="1"/>
</dbReference>
<dbReference type="PANTHER" id="PTHR13501">
    <property type="entry name" value="CHLOROPLAST 50S RIBOSOMAL PROTEIN L22-RELATED"/>
    <property type="match status" value="1"/>
</dbReference>
<dbReference type="PANTHER" id="PTHR13501:SF8">
    <property type="entry name" value="LARGE RIBOSOMAL SUBUNIT PROTEIN UL22M"/>
    <property type="match status" value="1"/>
</dbReference>
<dbReference type="Pfam" id="PF00237">
    <property type="entry name" value="Ribosomal_L22"/>
    <property type="match status" value="1"/>
</dbReference>
<dbReference type="SUPFAM" id="SSF54843">
    <property type="entry name" value="Ribosomal protein L22"/>
    <property type="match status" value="1"/>
</dbReference>
<reference key="1">
    <citation type="submission" date="2006-03" db="EMBL/GenBank/DDBJ databases">
        <title>Complete sequence of Rhodopseudomonas palustris BisB18.</title>
        <authorList>
            <consortium name="US DOE Joint Genome Institute"/>
            <person name="Copeland A."/>
            <person name="Lucas S."/>
            <person name="Lapidus A."/>
            <person name="Barry K."/>
            <person name="Detter J.C."/>
            <person name="Glavina del Rio T."/>
            <person name="Hammon N."/>
            <person name="Israni S."/>
            <person name="Dalin E."/>
            <person name="Tice H."/>
            <person name="Pitluck S."/>
            <person name="Chain P."/>
            <person name="Malfatti S."/>
            <person name="Shin M."/>
            <person name="Vergez L."/>
            <person name="Schmutz J."/>
            <person name="Larimer F."/>
            <person name="Land M."/>
            <person name="Hauser L."/>
            <person name="Pelletier D.A."/>
            <person name="Kyrpides N."/>
            <person name="Anderson I."/>
            <person name="Oda Y."/>
            <person name="Harwood C.S."/>
            <person name="Richardson P."/>
        </authorList>
    </citation>
    <scope>NUCLEOTIDE SEQUENCE [LARGE SCALE GENOMIC DNA]</scope>
    <source>
        <strain>BisB18</strain>
    </source>
</reference>
<accession>Q211F3</accession>
<feature type="chain" id="PRO_0000243195" description="Large ribosomal subunit protein uL22">
    <location>
        <begin position="1"/>
        <end position="128"/>
    </location>
</feature>